<gene>
    <name evidence="1" type="primary">accD</name>
    <name type="ordered locus">VC_1000</name>
</gene>
<dbReference type="EC" id="2.1.3.15" evidence="1"/>
<dbReference type="EMBL" id="AE003852">
    <property type="protein sequence ID" value="AAF94161.1"/>
    <property type="molecule type" value="Genomic_DNA"/>
</dbReference>
<dbReference type="PIR" id="B82253">
    <property type="entry name" value="B82253"/>
</dbReference>
<dbReference type="RefSeq" id="NP_230646.1">
    <property type="nucleotide sequence ID" value="NC_002505.1"/>
</dbReference>
<dbReference type="RefSeq" id="WP_000118593.1">
    <property type="nucleotide sequence ID" value="NZ_LT906614.1"/>
</dbReference>
<dbReference type="SMR" id="Q9KTA3"/>
<dbReference type="STRING" id="243277.VC_1000"/>
<dbReference type="DNASU" id="2614253"/>
<dbReference type="EnsemblBacteria" id="AAF94161">
    <property type="protein sequence ID" value="AAF94161"/>
    <property type="gene ID" value="VC_1000"/>
</dbReference>
<dbReference type="KEGG" id="vch:VC_1000"/>
<dbReference type="PATRIC" id="fig|243277.26.peg.954"/>
<dbReference type="eggNOG" id="COG0777">
    <property type="taxonomic scope" value="Bacteria"/>
</dbReference>
<dbReference type="HOGENOM" id="CLU_015486_1_3_6"/>
<dbReference type="UniPathway" id="UPA00655">
    <property type="reaction ID" value="UER00711"/>
</dbReference>
<dbReference type="Proteomes" id="UP000000584">
    <property type="component" value="Chromosome 1"/>
</dbReference>
<dbReference type="GO" id="GO:0009329">
    <property type="term" value="C:acetate CoA-transferase complex"/>
    <property type="evidence" value="ECO:0000318"/>
    <property type="project" value="GO_Central"/>
</dbReference>
<dbReference type="GO" id="GO:0003989">
    <property type="term" value="F:acetyl-CoA carboxylase activity"/>
    <property type="evidence" value="ECO:0007669"/>
    <property type="project" value="InterPro"/>
</dbReference>
<dbReference type="GO" id="GO:0005524">
    <property type="term" value="F:ATP binding"/>
    <property type="evidence" value="ECO:0007669"/>
    <property type="project" value="UniProtKB-KW"/>
</dbReference>
<dbReference type="GO" id="GO:0016743">
    <property type="term" value="F:carboxyl- or carbamoyltransferase activity"/>
    <property type="evidence" value="ECO:0007669"/>
    <property type="project" value="UniProtKB-UniRule"/>
</dbReference>
<dbReference type="GO" id="GO:0008270">
    <property type="term" value="F:zinc ion binding"/>
    <property type="evidence" value="ECO:0007669"/>
    <property type="project" value="UniProtKB-UniRule"/>
</dbReference>
<dbReference type="GO" id="GO:0006633">
    <property type="term" value="P:fatty acid biosynthetic process"/>
    <property type="evidence" value="ECO:0000318"/>
    <property type="project" value="GO_Central"/>
</dbReference>
<dbReference type="GO" id="GO:2001295">
    <property type="term" value="P:malonyl-CoA biosynthetic process"/>
    <property type="evidence" value="ECO:0000318"/>
    <property type="project" value="GO_Central"/>
</dbReference>
<dbReference type="GO" id="GO:0017148">
    <property type="term" value="P:negative regulation of translation"/>
    <property type="evidence" value="ECO:0000318"/>
    <property type="project" value="GO_Central"/>
</dbReference>
<dbReference type="FunFam" id="3.90.226.10:FF:000013">
    <property type="entry name" value="Acetyl-coenzyme A carboxylase carboxyl transferase subunit beta"/>
    <property type="match status" value="1"/>
</dbReference>
<dbReference type="Gene3D" id="3.90.226.10">
    <property type="entry name" value="2-enoyl-CoA Hydratase, Chain A, domain 1"/>
    <property type="match status" value="1"/>
</dbReference>
<dbReference type="HAMAP" id="MF_01395">
    <property type="entry name" value="AcetylCoA_CT_beta"/>
    <property type="match status" value="1"/>
</dbReference>
<dbReference type="InterPro" id="IPR034733">
    <property type="entry name" value="AcCoA_carboxyl_beta"/>
</dbReference>
<dbReference type="InterPro" id="IPR000438">
    <property type="entry name" value="Acetyl_CoA_COase_Trfase_b_su"/>
</dbReference>
<dbReference type="InterPro" id="IPR029045">
    <property type="entry name" value="ClpP/crotonase-like_dom_sf"/>
</dbReference>
<dbReference type="InterPro" id="IPR011762">
    <property type="entry name" value="COA_CT_N"/>
</dbReference>
<dbReference type="InterPro" id="IPR041010">
    <property type="entry name" value="Znf-ACC"/>
</dbReference>
<dbReference type="NCBIfam" id="TIGR00515">
    <property type="entry name" value="accD"/>
    <property type="match status" value="1"/>
</dbReference>
<dbReference type="PANTHER" id="PTHR42995">
    <property type="entry name" value="ACETYL-COENZYME A CARBOXYLASE CARBOXYL TRANSFERASE SUBUNIT BETA, CHLOROPLASTIC"/>
    <property type="match status" value="1"/>
</dbReference>
<dbReference type="PANTHER" id="PTHR42995:SF5">
    <property type="entry name" value="ACETYL-COENZYME A CARBOXYLASE CARBOXYL TRANSFERASE SUBUNIT BETA, CHLOROPLASTIC"/>
    <property type="match status" value="1"/>
</dbReference>
<dbReference type="Pfam" id="PF01039">
    <property type="entry name" value="Carboxyl_trans"/>
    <property type="match status" value="1"/>
</dbReference>
<dbReference type="Pfam" id="PF17848">
    <property type="entry name" value="Zn_ribbon_ACC"/>
    <property type="match status" value="1"/>
</dbReference>
<dbReference type="PRINTS" id="PR01070">
    <property type="entry name" value="ACCCTRFRASEB"/>
</dbReference>
<dbReference type="SUPFAM" id="SSF52096">
    <property type="entry name" value="ClpP/crotonase"/>
    <property type="match status" value="1"/>
</dbReference>
<dbReference type="PROSITE" id="PS50980">
    <property type="entry name" value="COA_CT_NTER"/>
    <property type="match status" value="1"/>
</dbReference>
<feature type="chain" id="PRO_0000359084" description="Acetyl-coenzyme A carboxylase carboxyl transferase subunit beta">
    <location>
        <begin position="1"/>
        <end position="308"/>
    </location>
</feature>
<feature type="domain" description="CoA carboxyltransferase N-terminal" evidence="2">
    <location>
        <begin position="25"/>
        <end position="294"/>
    </location>
</feature>
<feature type="zinc finger region" description="C4-type" evidence="1">
    <location>
        <begin position="29"/>
        <end position="51"/>
    </location>
</feature>
<feature type="binding site" evidence="1">
    <location>
        <position position="29"/>
    </location>
    <ligand>
        <name>Zn(2+)</name>
        <dbReference type="ChEBI" id="CHEBI:29105"/>
    </ligand>
</feature>
<feature type="binding site" evidence="1">
    <location>
        <position position="32"/>
    </location>
    <ligand>
        <name>Zn(2+)</name>
        <dbReference type="ChEBI" id="CHEBI:29105"/>
    </ligand>
</feature>
<feature type="binding site" evidence="1">
    <location>
        <position position="48"/>
    </location>
    <ligand>
        <name>Zn(2+)</name>
        <dbReference type="ChEBI" id="CHEBI:29105"/>
    </ligand>
</feature>
<feature type="binding site" evidence="1">
    <location>
        <position position="51"/>
    </location>
    <ligand>
        <name>Zn(2+)</name>
        <dbReference type="ChEBI" id="CHEBI:29105"/>
    </ligand>
</feature>
<protein>
    <recommendedName>
        <fullName evidence="1">Acetyl-coenzyme A carboxylase carboxyl transferase subunit beta</fullName>
        <shortName evidence="1">ACCase subunit beta</shortName>
        <shortName evidence="1">Acetyl-CoA carboxylase carboxyltransferase subunit beta</shortName>
        <ecNumber evidence="1">2.1.3.15</ecNumber>
    </recommendedName>
</protein>
<keyword id="KW-0067">ATP-binding</keyword>
<keyword id="KW-0963">Cytoplasm</keyword>
<keyword id="KW-0275">Fatty acid biosynthesis</keyword>
<keyword id="KW-0276">Fatty acid metabolism</keyword>
<keyword id="KW-0444">Lipid biosynthesis</keyword>
<keyword id="KW-0443">Lipid metabolism</keyword>
<keyword id="KW-0479">Metal-binding</keyword>
<keyword id="KW-0547">Nucleotide-binding</keyword>
<keyword id="KW-1185">Reference proteome</keyword>
<keyword id="KW-0808">Transferase</keyword>
<keyword id="KW-0862">Zinc</keyword>
<keyword id="KW-0863">Zinc-finger</keyword>
<organism>
    <name type="scientific">Vibrio cholerae serotype O1 (strain ATCC 39315 / El Tor Inaba N16961)</name>
    <dbReference type="NCBI Taxonomy" id="243277"/>
    <lineage>
        <taxon>Bacteria</taxon>
        <taxon>Pseudomonadati</taxon>
        <taxon>Pseudomonadota</taxon>
        <taxon>Gammaproteobacteria</taxon>
        <taxon>Vibrionales</taxon>
        <taxon>Vibrionaceae</taxon>
        <taxon>Vibrio</taxon>
    </lineage>
</organism>
<comment type="function">
    <text evidence="1">Component of the acetyl coenzyme A carboxylase (ACC) complex. Biotin carboxylase (BC) catalyzes the carboxylation of biotin on its carrier protein (BCCP) and then the CO(2) group is transferred by the transcarboxylase to acetyl-CoA to form malonyl-CoA.</text>
</comment>
<comment type="catalytic activity">
    <reaction evidence="1">
        <text>N(6)-carboxybiotinyl-L-lysyl-[protein] + acetyl-CoA = N(6)-biotinyl-L-lysyl-[protein] + malonyl-CoA</text>
        <dbReference type="Rhea" id="RHEA:54728"/>
        <dbReference type="Rhea" id="RHEA-COMP:10505"/>
        <dbReference type="Rhea" id="RHEA-COMP:10506"/>
        <dbReference type="ChEBI" id="CHEBI:57288"/>
        <dbReference type="ChEBI" id="CHEBI:57384"/>
        <dbReference type="ChEBI" id="CHEBI:83144"/>
        <dbReference type="ChEBI" id="CHEBI:83145"/>
        <dbReference type="EC" id="2.1.3.15"/>
    </reaction>
</comment>
<comment type="cofactor">
    <cofactor evidence="1">
        <name>Zn(2+)</name>
        <dbReference type="ChEBI" id="CHEBI:29105"/>
    </cofactor>
    <text evidence="1">Binds 1 zinc ion per subunit.</text>
</comment>
<comment type="pathway">
    <text evidence="1">Lipid metabolism; malonyl-CoA biosynthesis; malonyl-CoA from acetyl-CoA: step 1/1.</text>
</comment>
<comment type="subunit">
    <text evidence="1">Acetyl-CoA carboxylase is a heterohexamer composed of biotin carboxyl carrier protein (AccB), biotin carboxylase (AccC) and two subunits each of ACCase subunit alpha (AccA) and ACCase subunit beta (AccD).</text>
</comment>
<comment type="subcellular location">
    <subcellularLocation>
        <location evidence="1">Cytoplasm</location>
    </subcellularLocation>
</comment>
<comment type="similarity">
    <text evidence="1">Belongs to the AccD/PCCB family.</text>
</comment>
<evidence type="ECO:0000255" key="1">
    <source>
        <dbReference type="HAMAP-Rule" id="MF_01395"/>
    </source>
</evidence>
<evidence type="ECO:0000255" key="2">
    <source>
        <dbReference type="PROSITE-ProRule" id="PRU01136"/>
    </source>
</evidence>
<name>ACCD_VIBCH</name>
<sequence>MSWLEKILEKSNIVSSRKASIPEGVWTKCTSCEQVLYYAELERNLEVCPKCDHHMRMKARRRLETFLDQGERVELGEELEPQDKLKFKDSKRYKERLAAAQKASGEKDALVVMKGAVLGVPVVACAFEFSFMGGSMGSVVGARFVRAVEAAIEHNCGLICFSASGGARMQEALMSLMQMAKTSAALERLSDKGLPFISVMTDPTMGGVSASLAMLGDINIGEPKALIGFAGRRVIEQTVREELPEGFQRSEFLLEHGAIDMIVDRRDMRQRVASLLAKMTGQASPLVVSVNDAPNEVPYAVPEANKKG</sequence>
<reference key="1">
    <citation type="journal article" date="2000" name="Nature">
        <title>DNA sequence of both chromosomes of the cholera pathogen Vibrio cholerae.</title>
        <authorList>
            <person name="Heidelberg J.F."/>
            <person name="Eisen J.A."/>
            <person name="Nelson W.C."/>
            <person name="Clayton R.A."/>
            <person name="Gwinn M.L."/>
            <person name="Dodson R.J."/>
            <person name="Haft D.H."/>
            <person name="Hickey E.K."/>
            <person name="Peterson J.D."/>
            <person name="Umayam L.A."/>
            <person name="Gill S.R."/>
            <person name="Nelson K.E."/>
            <person name="Read T.D."/>
            <person name="Tettelin H."/>
            <person name="Richardson D.L."/>
            <person name="Ermolaeva M.D."/>
            <person name="Vamathevan J.J."/>
            <person name="Bass S."/>
            <person name="Qin H."/>
            <person name="Dragoi I."/>
            <person name="Sellers P."/>
            <person name="McDonald L.A."/>
            <person name="Utterback T.R."/>
            <person name="Fleischmann R.D."/>
            <person name="Nierman W.C."/>
            <person name="White O."/>
            <person name="Salzberg S.L."/>
            <person name="Smith H.O."/>
            <person name="Colwell R.R."/>
            <person name="Mekalanos J.J."/>
            <person name="Venter J.C."/>
            <person name="Fraser C.M."/>
        </authorList>
    </citation>
    <scope>NUCLEOTIDE SEQUENCE [LARGE SCALE GENOMIC DNA]</scope>
    <source>
        <strain>ATCC 39315 / El Tor Inaba N16961</strain>
    </source>
</reference>
<proteinExistence type="inferred from homology"/>
<accession>Q9KTA3</accession>